<organism>
    <name type="scientific">Rickettsia felis (strain ATCC VR-1525 / URRWXCal2)</name>
    <name type="common">Rickettsia azadi</name>
    <dbReference type="NCBI Taxonomy" id="315456"/>
    <lineage>
        <taxon>Bacteria</taxon>
        <taxon>Pseudomonadati</taxon>
        <taxon>Pseudomonadota</taxon>
        <taxon>Alphaproteobacteria</taxon>
        <taxon>Rickettsiales</taxon>
        <taxon>Rickettsiaceae</taxon>
        <taxon>Rickettsieae</taxon>
        <taxon>Rickettsia</taxon>
        <taxon>spotted fever group</taxon>
    </lineage>
</organism>
<sequence>MTNNLSGYRNKFVRVKTSKKRTVSSSNWLRRQLNDPYVAKARLEGFRSRAAYKLLEIHGKFKLFNPNMKIVDLGAAPGGWSQVASKLIKASDNSLNNKIISIDLLEIEPIAEVEFFQKDFFEENTEELIIQALDGKADIVMSDMASNTIGHKATDHIRTLLLCEQAFEFALKVLKPSGHFIAKIFRGGAENELLNKVKREFRTVKHFKPSSSRSESTEIYLVALNKK</sequence>
<name>RLME_RICFE</name>
<dbReference type="EC" id="2.1.1.166" evidence="1"/>
<dbReference type="EMBL" id="CP000053">
    <property type="protein sequence ID" value="AAY61969.1"/>
    <property type="molecule type" value="Genomic_DNA"/>
</dbReference>
<dbReference type="SMR" id="Q4UKG2"/>
<dbReference type="STRING" id="315456.RF_1118"/>
<dbReference type="KEGG" id="rfe:RF_1118"/>
<dbReference type="eggNOG" id="COG0293">
    <property type="taxonomic scope" value="Bacteria"/>
</dbReference>
<dbReference type="HOGENOM" id="CLU_009422_4_0_5"/>
<dbReference type="OrthoDB" id="9790080at2"/>
<dbReference type="Proteomes" id="UP000008548">
    <property type="component" value="Chromosome"/>
</dbReference>
<dbReference type="GO" id="GO:0005737">
    <property type="term" value="C:cytoplasm"/>
    <property type="evidence" value="ECO:0007669"/>
    <property type="project" value="UniProtKB-SubCell"/>
</dbReference>
<dbReference type="GO" id="GO:0008650">
    <property type="term" value="F:rRNA (uridine-2'-O-)-methyltransferase activity"/>
    <property type="evidence" value="ECO:0007669"/>
    <property type="project" value="UniProtKB-UniRule"/>
</dbReference>
<dbReference type="FunFam" id="3.40.50.150:FF:000354">
    <property type="entry name" value="Ribosomal RNA large subunit methyltransferase E"/>
    <property type="match status" value="1"/>
</dbReference>
<dbReference type="Gene3D" id="3.40.50.150">
    <property type="entry name" value="Vaccinia Virus protein VP39"/>
    <property type="match status" value="1"/>
</dbReference>
<dbReference type="HAMAP" id="MF_01547">
    <property type="entry name" value="RNA_methyltr_E"/>
    <property type="match status" value="1"/>
</dbReference>
<dbReference type="InterPro" id="IPR050082">
    <property type="entry name" value="RNA_methyltr_RlmE"/>
</dbReference>
<dbReference type="InterPro" id="IPR002877">
    <property type="entry name" value="RNA_MeTrfase_FtsJ_dom"/>
</dbReference>
<dbReference type="InterPro" id="IPR015507">
    <property type="entry name" value="rRNA-MeTfrase_E"/>
</dbReference>
<dbReference type="InterPro" id="IPR029063">
    <property type="entry name" value="SAM-dependent_MTases_sf"/>
</dbReference>
<dbReference type="PANTHER" id="PTHR10920">
    <property type="entry name" value="RIBOSOMAL RNA METHYLTRANSFERASE"/>
    <property type="match status" value="1"/>
</dbReference>
<dbReference type="PANTHER" id="PTHR10920:SF18">
    <property type="entry name" value="RRNA METHYLTRANSFERASE 2, MITOCHONDRIAL"/>
    <property type="match status" value="1"/>
</dbReference>
<dbReference type="Pfam" id="PF01728">
    <property type="entry name" value="FtsJ"/>
    <property type="match status" value="1"/>
</dbReference>
<dbReference type="PIRSF" id="PIRSF005461">
    <property type="entry name" value="23S_rRNA_mtase"/>
    <property type="match status" value="1"/>
</dbReference>
<dbReference type="SUPFAM" id="SSF53335">
    <property type="entry name" value="S-adenosyl-L-methionine-dependent methyltransferases"/>
    <property type="match status" value="1"/>
</dbReference>
<evidence type="ECO:0000255" key="1">
    <source>
        <dbReference type="HAMAP-Rule" id="MF_01547"/>
    </source>
</evidence>
<keyword id="KW-0963">Cytoplasm</keyword>
<keyword id="KW-0489">Methyltransferase</keyword>
<keyword id="KW-0698">rRNA processing</keyword>
<keyword id="KW-0949">S-adenosyl-L-methionine</keyword>
<keyword id="KW-0808">Transferase</keyword>
<proteinExistence type="inferred from homology"/>
<feature type="chain" id="PRO_0000155533" description="Ribosomal RNA large subunit methyltransferase E">
    <location>
        <begin position="1"/>
        <end position="227"/>
    </location>
</feature>
<feature type="active site" description="Proton acceptor" evidence="1">
    <location>
        <position position="183"/>
    </location>
</feature>
<feature type="binding site" evidence="1">
    <location>
        <position position="78"/>
    </location>
    <ligand>
        <name>S-adenosyl-L-methionine</name>
        <dbReference type="ChEBI" id="CHEBI:59789"/>
    </ligand>
</feature>
<feature type="binding site" evidence="1">
    <location>
        <position position="80"/>
    </location>
    <ligand>
        <name>S-adenosyl-L-methionine</name>
        <dbReference type="ChEBI" id="CHEBI:59789"/>
    </ligand>
</feature>
<feature type="binding site" evidence="1">
    <location>
        <position position="103"/>
    </location>
    <ligand>
        <name>S-adenosyl-L-methionine</name>
        <dbReference type="ChEBI" id="CHEBI:59789"/>
    </ligand>
</feature>
<feature type="binding site" evidence="1">
    <location>
        <position position="119"/>
    </location>
    <ligand>
        <name>S-adenosyl-L-methionine</name>
        <dbReference type="ChEBI" id="CHEBI:59789"/>
    </ligand>
</feature>
<feature type="binding site" evidence="1">
    <location>
        <position position="143"/>
    </location>
    <ligand>
        <name>S-adenosyl-L-methionine</name>
        <dbReference type="ChEBI" id="CHEBI:59789"/>
    </ligand>
</feature>
<protein>
    <recommendedName>
        <fullName evidence="1">Ribosomal RNA large subunit methyltransferase E</fullName>
        <ecNumber evidence="1">2.1.1.166</ecNumber>
    </recommendedName>
    <alternativeName>
        <fullName evidence="1">23S rRNA Um2552 methyltransferase</fullName>
    </alternativeName>
    <alternativeName>
        <fullName evidence="1">rRNA (uridine-2'-O-)-methyltransferase</fullName>
    </alternativeName>
</protein>
<comment type="function">
    <text evidence="1">Specifically methylates the uridine in position 2552 of 23S rRNA at the 2'-O position of the ribose in the fully assembled 50S ribosomal subunit.</text>
</comment>
<comment type="catalytic activity">
    <reaction evidence="1">
        <text>uridine(2552) in 23S rRNA + S-adenosyl-L-methionine = 2'-O-methyluridine(2552) in 23S rRNA + S-adenosyl-L-homocysteine + H(+)</text>
        <dbReference type="Rhea" id="RHEA:42720"/>
        <dbReference type="Rhea" id="RHEA-COMP:10202"/>
        <dbReference type="Rhea" id="RHEA-COMP:10203"/>
        <dbReference type="ChEBI" id="CHEBI:15378"/>
        <dbReference type="ChEBI" id="CHEBI:57856"/>
        <dbReference type="ChEBI" id="CHEBI:59789"/>
        <dbReference type="ChEBI" id="CHEBI:65315"/>
        <dbReference type="ChEBI" id="CHEBI:74478"/>
        <dbReference type="EC" id="2.1.1.166"/>
    </reaction>
</comment>
<comment type="subcellular location">
    <subcellularLocation>
        <location evidence="1">Cytoplasm</location>
    </subcellularLocation>
</comment>
<comment type="similarity">
    <text evidence="1">Belongs to the class I-like SAM-binding methyltransferase superfamily. RNA methyltransferase RlmE family.</text>
</comment>
<gene>
    <name evidence="1" type="primary">rlmE</name>
    <name evidence="1" type="synonym">ftsJ</name>
    <name evidence="1" type="synonym">rrmJ</name>
    <name type="ordered locus">RF_1118</name>
</gene>
<accession>Q4UKG2</accession>
<reference key="1">
    <citation type="journal article" date="2005" name="PLoS Biol.">
        <title>The genome sequence of Rickettsia felis identifies the first putative conjugative plasmid in an obligate intracellular parasite.</title>
        <authorList>
            <person name="Ogata H."/>
            <person name="Renesto P."/>
            <person name="Audic S."/>
            <person name="Robert C."/>
            <person name="Blanc G."/>
            <person name="Fournier P.-E."/>
            <person name="Parinello H."/>
            <person name="Claverie J.-M."/>
            <person name="Raoult D."/>
        </authorList>
    </citation>
    <scope>NUCLEOTIDE SEQUENCE [LARGE SCALE GENOMIC DNA]</scope>
    <source>
        <strain>ATCC VR-1525 / URRWXCal2</strain>
    </source>
</reference>